<gene>
    <name type="primary">ydcA</name>
    <name type="ordered locus">BSU04610</name>
</gene>
<keyword id="KW-1003">Cell membrane</keyword>
<keyword id="KW-0378">Hydrolase</keyword>
<keyword id="KW-0472">Membrane</keyword>
<keyword id="KW-0645">Protease</keyword>
<keyword id="KW-1185">Reference proteome</keyword>
<keyword id="KW-0812">Transmembrane</keyword>
<keyword id="KW-1133">Transmembrane helix</keyword>
<feature type="chain" id="PRO_0000382688" description="Putative rhomboid protease YdcA">
    <location>
        <begin position="1"/>
        <end position="199"/>
    </location>
</feature>
<feature type="transmembrane region" description="Helical" evidence="2">
    <location>
        <begin position="14"/>
        <end position="34"/>
    </location>
</feature>
<feature type="transmembrane region" description="Helical" evidence="2">
    <location>
        <begin position="65"/>
        <end position="85"/>
    </location>
</feature>
<feature type="transmembrane region" description="Helical" evidence="2">
    <location>
        <begin position="97"/>
        <end position="117"/>
    </location>
</feature>
<feature type="transmembrane region" description="Helical" evidence="2">
    <location>
        <begin position="122"/>
        <end position="142"/>
    </location>
</feature>
<feature type="transmembrane region" description="Helical" evidence="2">
    <location>
        <begin position="147"/>
        <end position="167"/>
    </location>
</feature>
<feature type="transmembrane region" description="Helical" evidence="2">
    <location>
        <begin position="172"/>
        <end position="192"/>
    </location>
</feature>
<feature type="active site" description="Nucleophile" evidence="3">
    <location>
        <position position="126"/>
    </location>
</feature>
<feature type="active site" description="Charge relay system" evidence="1">
    <location>
        <position position="177"/>
    </location>
</feature>
<evidence type="ECO:0000250" key="1"/>
<evidence type="ECO:0000255" key="2"/>
<evidence type="ECO:0000305" key="3"/>
<proteinExistence type="inferred from homology"/>
<organism>
    <name type="scientific">Bacillus subtilis (strain 168)</name>
    <dbReference type="NCBI Taxonomy" id="224308"/>
    <lineage>
        <taxon>Bacteria</taxon>
        <taxon>Bacillati</taxon>
        <taxon>Bacillota</taxon>
        <taxon>Bacilli</taxon>
        <taxon>Bacillales</taxon>
        <taxon>Bacillaceae</taxon>
        <taxon>Bacillus</taxon>
    </lineage>
</organism>
<comment type="subcellular location">
    <subcellularLocation>
        <location evidence="3">Cell membrane</location>
        <topology evidence="3">Multi-pass membrane protein</topology>
    </subcellularLocation>
</comment>
<comment type="similarity">
    <text evidence="3">Belongs to the peptidase S54 family.</text>
</comment>
<reference key="1">
    <citation type="journal article" date="1997" name="Mol. Gen. Genet.">
        <title>Characterization of an lrp-like (lrpC) gene from Bacillus subtilis.</title>
        <authorList>
            <person name="Beloin C."/>
            <person name="Ayora S."/>
            <person name="Exley R."/>
            <person name="Hirschbein L."/>
            <person name="Ogasawara N."/>
            <person name="Kasahara Y."/>
            <person name="Alonso J.C."/>
            <person name="Le Hegarat F."/>
        </authorList>
    </citation>
    <scope>NUCLEOTIDE SEQUENCE [GENOMIC DNA]</scope>
    <source>
        <strain>168</strain>
    </source>
</reference>
<reference key="2">
    <citation type="journal article" date="1997" name="Nature">
        <title>The complete genome sequence of the Gram-positive bacterium Bacillus subtilis.</title>
        <authorList>
            <person name="Kunst F."/>
            <person name="Ogasawara N."/>
            <person name="Moszer I."/>
            <person name="Albertini A.M."/>
            <person name="Alloni G."/>
            <person name="Azevedo V."/>
            <person name="Bertero M.G."/>
            <person name="Bessieres P."/>
            <person name="Bolotin A."/>
            <person name="Borchert S."/>
            <person name="Borriss R."/>
            <person name="Boursier L."/>
            <person name="Brans A."/>
            <person name="Braun M."/>
            <person name="Brignell S.C."/>
            <person name="Bron S."/>
            <person name="Brouillet S."/>
            <person name="Bruschi C.V."/>
            <person name="Caldwell B."/>
            <person name="Capuano V."/>
            <person name="Carter N.M."/>
            <person name="Choi S.-K."/>
            <person name="Codani J.-J."/>
            <person name="Connerton I.F."/>
            <person name="Cummings N.J."/>
            <person name="Daniel R.A."/>
            <person name="Denizot F."/>
            <person name="Devine K.M."/>
            <person name="Duesterhoeft A."/>
            <person name="Ehrlich S.D."/>
            <person name="Emmerson P.T."/>
            <person name="Entian K.-D."/>
            <person name="Errington J."/>
            <person name="Fabret C."/>
            <person name="Ferrari E."/>
            <person name="Foulger D."/>
            <person name="Fritz C."/>
            <person name="Fujita M."/>
            <person name="Fujita Y."/>
            <person name="Fuma S."/>
            <person name="Galizzi A."/>
            <person name="Galleron N."/>
            <person name="Ghim S.-Y."/>
            <person name="Glaser P."/>
            <person name="Goffeau A."/>
            <person name="Golightly E.J."/>
            <person name="Grandi G."/>
            <person name="Guiseppi G."/>
            <person name="Guy B.J."/>
            <person name="Haga K."/>
            <person name="Haiech J."/>
            <person name="Harwood C.R."/>
            <person name="Henaut A."/>
            <person name="Hilbert H."/>
            <person name="Holsappel S."/>
            <person name="Hosono S."/>
            <person name="Hullo M.-F."/>
            <person name="Itaya M."/>
            <person name="Jones L.-M."/>
            <person name="Joris B."/>
            <person name="Karamata D."/>
            <person name="Kasahara Y."/>
            <person name="Klaerr-Blanchard M."/>
            <person name="Klein C."/>
            <person name="Kobayashi Y."/>
            <person name="Koetter P."/>
            <person name="Koningstein G."/>
            <person name="Krogh S."/>
            <person name="Kumano M."/>
            <person name="Kurita K."/>
            <person name="Lapidus A."/>
            <person name="Lardinois S."/>
            <person name="Lauber J."/>
            <person name="Lazarevic V."/>
            <person name="Lee S.-M."/>
            <person name="Levine A."/>
            <person name="Liu H."/>
            <person name="Masuda S."/>
            <person name="Mauel C."/>
            <person name="Medigue C."/>
            <person name="Medina N."/>
            <person name="Mellado R.P."/>
            <person name="Mizuno M."/>
            <person name="Moestl D."/>
            <person name="Nakai S."/>
            <person name="Noback M."/>
            <person name="Noone D."/>
            <person name="O'Reilly M."/>
            <person name="Ogawa K."/>
            <person name="Ogiwara A."/>
            <person name="Oudega B."/>
            <person name="Park S.-H."/>
            <person name="Parro V."/>
            <person name="Pohl T.M."/>
            <person name="Portetelle D."/>
            <person name="Porwollik S."/>
            <person name="Prescott A.M."/>
            <person name="Presecan E."/>
            <person name="Pujic P."/>
            <person name="Purnelle B."/>
            <person name="Rapoport G."/>
            <person name="Rey M."/>
            <person name="Reynolds S."/>
            <person name="Rieger M."/>
            <person name="Rivolta C."/>
            <person name="Rocha E."/>
            <person name="Roche B."/>
            <person name="Rose M."/>
            <person name="Sadaie Y."/>
            <person name="Sato T."/>
            <person name="Scanlan E."/>
            <person name="Schleich S."/>
            <person name="Schroeter R."/>
            <person name="Scoffone F."/>
            <person name="Sekiguchi J."/>
            <person name="Sekowska A."/>
            <person name="Seror S.J."/>
            <person name="Serror P."/>
            <person name="Shin B.-S."/>
            <person name="Soldo B."/>
            <person name="Sorokin A."/>
            <person name="Tacconi E."/>
            <person name="Takagi T."/>
            <person name="Takahashi H."/>
            <person name="Takemaru K."/>
            <person name="Takeuchi M."/>
            <person name="Tamakoshi A."/>
            <person name="Tanaka T."/>
            <person name="Terpstra P."/>
            <person name="Tognoni A."/>
            <person name="Tosato V."/>
            <person name="Uchiyama S."/>
            <person name="Vandenbol M."/>
            <person name="Vannier F."/>
            <person name="Vassarotti A."/>
            <person name="Viari A."/>
            <person name="Wambutt R."/>
            <person name="Wedler E."/>
            <person name="Wedler H."/>
            <person name="Weitzenegger T."/>
            <person name="Winters P."/>
            <person name="Wipat A."/>
            <person name="Yamamoto H."/>
            <person name="Yamane K."/>
            <person name="Yasumoto K."/>
            <person name="Yata K."/>
            <person name="Yoshida K."/>
            <person name="Yoshikawa H.-F."/>
            <person name="Zumstein E."/>
            <person name="Yoshikawa H."/>
            <person name="Danchin A."/>
        </authorList>
    </citation>
    <scope>NUCLEOTIDE SEQUENCE [LARGE SCALE GENOMIC DNA]</scope>
    <source>
        <strain>168</strain>
    </source>
</reference>
<sequence>MFIRTENFQTFIRLYPVVTFILALQAVLWLFFSLPAHSVVLWRDTVTGYNLGVANGEWWRLITPILLHAGFTHLLFNSMSIFLFAPALERMLGKARFLLVYAGSGIIGNIGTYVTEPLDYVHVGASGAIFGLFGVYLFMVLFRNELIGQEHSKMIITLLAFAVLMSFINSNINMMAHLFGLCGGFLLSFLCVQKKERRY</sequence>
<dbReference type="EC" id="3.4.21.-"/>
<dbReference type="EMBL" id="AB001488">
    <property type="protein sequence ID" value="BAA19298.1"/>
    <property type="molecule type" value="Genomic_DNA"/>
</dbReference>
<dbReference type="EMBL" id="AL009126">
    <property type="protein sequence ID" value="CAB12268.1"/>
    <property type="molecule type" value="Genomic_DNA"/>
</dbReference>
<dbReference type="PIR" id="G69772">
    <property type="entry name" value="G69772"/>
</dbReference>
<dbReference type="RefSeq" id="NP_388342.1">
    <property type="nucleotide sequence ID" value="NC_000964.3"/>
</dbReference>
<dbReference type="RefSeq" id="WP_003246687.1">
    <property type="nucleotide sequence ID" value="NZ_OZ025638.1"/>
</dbReference>
<dbReference type="SMR" id="P96617"/>
<dbReference type="FunCoup" id="P96617">
    <property type="interactions" value="267"/>
</dbReference>
<dbReference type="STRING" id="224308.BSU04610"/>
<dbReference type="MEROPS" id="S54.A18"/>
<dbReference type="PaxDb" id="224308-BSU04610"/>
<dbReference type="EnsemblBacteria" id="CAB12268">
    <property type="protein sequence ID" value="CAB12268"/>
    <property type="gene ID" value="BSU_04610"/>
</dbReference>
<dbReference type="GeneID" id="939936"/>
<dbReference type="KEGG" id="bsu:BSU04610"/>
<dbReference type="PATRIC" id="fig|224308.179.peg.489"/>
<dbReference type="eggNOG" id="COG0705">
    <property type="taxonomic scope" value="Bacteria"/>
</dbReference>
<dbReference type="InParanoid" id="P96617"/>
<dbReference type="OrthoDB" id="9813074at2"/>
<dbReference type="PhylomeDB" id="P96617"/>
<dbReference type="BioCyc" id="BSUB:BSU04610-MONOMER"/>
<dbReference type="Proteomes" id="UP000001570">
    <property type="component" value="Chromosome"/>
</dbReference>
<dbReference type="GO" id="GO:0005886">
    <property type="term" value="C:plasma membrane"/>
    <property type="evidence" value="ECO:0007669"/>
    <property type="project" value="UniProtKB-SubCell"/>
</dbReference>
<dbReference type="GO" id="GO:0004252">
    <property type="term" value="F:serine-type endopeptidase activity"/>
    <property type="evidence" value="ECO:0000318"/>
    <property type="project" value="GO_Central"/>
</dbReference>
<dbReference type="GO" id="GO:0006508">
    <property type="term" value="P:proteolysis"/>
    <property type="evidence" value="ECO:0007669"/>
    <property type="project" value="UniProtKB-KW"/>
</dbReference>
<dbReference type="Gene3D" id="1.20.1540.10">
    <property type="entry name" value="Rhomboid-like"/>
    <property type="match status" value="1"/>
</dbReference>
<dbReference type="InterPro" id="IPR022764">
    <property type="entry name" value="Peptidase_S54_rhomboid_dom"/>
</dbReference>
<dbReference type="InterPro" id="IPR035952">
    <property type="entry name" value="Rhomboid-like_sf"/>
</dbReference>
<dbReference type="InterPro" id="IPR050925">
    <property type="entry name" value="Rhomboid_protease_S54"/>
</dbReference>
<dbReference type="PANTHER" id="PTHR43731:SF14">
    <property type="entry name" value="PRESENILIN-ASSOCIATED RHOMBOID-LIKE PROTEIN, MITOCHONDRIAL"/>
    <property type="match status" value="1"/>
</dbReference>
<dbReference type="PANTHER" id="PTHR43731">
    <property type="entry name" value="RHOMBOID PROTEASE"/>
    <property type="match status" value="1"/>
</dbReference>
<dbReference type="Pfam" id="PF01694">
    <property type="entry name" value="Rhomboid"/>
    <property type="match status" value="1"/>
</dbReference>
<dbReference type="SUPFAM" id="SSF144091">
    <property type="entry name" value="Rhomboid-like"/>
    <property type="match status" value="1"/>
</dbReference>
<accession>P96617</accession>
<accession>Q797K7</accession>
<protein>
    <recommendedName>
        <fullName>Putative rhomboid protease YdcA</fullName>
        <ecNumber>3.4.21.-</ecNumber>
    </recommendedName>
</protein>
<name>YDCA_BACSU</name>